<dbReference type="EMBL" id="FJ360819">
    <property type="protein sequence ID" value="ACJ23139.1"/>
    <property type="molecule type" value="mRNA"/>
</dbReference>
<dbReference type="SMR" id="B8XH30"/>
<dbReference type="GO" id="GO:0005576">
    <property type="term" value="C:extracellular region"/>
    <property type="evidence" value="ECO:0007669"/>
    <property type="project" value="UniProtKB-SubCell"/>
</dbReference>
<dbReference type="GO" id="GO:0015459">
    <property type="term" value="F:potassium channel regulator activity"/>
    <property type="evidence" value="ECO:0007669"/>
    <property type="project" value="UniProtKB-KW"/>
</dbReference>
<dbReference type="GO" id="GO:0090729">
    <property type="term" value="F:toxin activity"/>
    <property type="evidence" value="ECO:0007669"/>
    <property type="project" value="UniProtKB-KW"/>
</dbReference>
<keyword id="KW-1015">Disulfide bond</keyword>
<keyword id="KW-0872">Ion channel impairing toxin</keyword>
<keyword id="KW-0528">Neurotoxin</keyword>
<keyword id="KW-0632">Potassium channel impairing toxin</keyword>
<keyword id="KW-0964">Secreted</keyword>
<keyword id="KW-0732">Signal</keyword>
<keyword id="KW-0800">Toxin</keyword>
<name>KA23K_BUTIS</name>
<sequence length="62" mass="7411">MQKLFIVLLLFCILRLDAEVDGRTMSHCNQSECQEKCKKKNKNGRCITEFEMNYVYNRCRCN</sequence>
<evidence type="ECO:0000250" key="1"/>
<evidence type="ECO:0000255" key="2"/>
<evidence type="ECO:0000305" key="3"/>
<feature type="signal peptide" evidence="2">
    <location>
        <begin position="1"/>
        <end position="18"/>
    </location>
</feature>
<feature type="chain" id="PRO_0000417440" description="Potassium channel toxin alpha-KTx Tx308">
    <location>
        <begin position="19"/>
        <end position="62"/>
    </location>
</feature>
<feature type="disulfide bond" evidence="2">
    <location>
        <begin position="28"/>
        <end position="46"/>
    </location>
</feature>
<feature type="disulfide bond" evidence="2">
    <location>
        <begin position="33"/>
        <end position="59"/>
    </location>
</feature>
<feature type="disulfide bond" evidence="2">
    <location>
        <begin position="37"/>
        <end position="61"/>
    </location>
</feature>
<organism>
    <name type="scientific">Buthus israelis</name>
    <name type="common">Israeli scorpion</name>
    <name type="synonym">Buthus occitanus israelis</name>
    <dbReference type="NCBI Taxonomy" id="2899555"/>
    <lineage>
        <taxon>Eukaryota</taxon>
        <taxon>Metazoa</taxon>
        <taxon>Ecdysozoa</taxon>
        <taxon>Arthropoda</taxon>
        <taxon>Chelicerata</taxon>
        <taxon>Arachnida</taxon>
        <taxon>Scorpiones</taxon>
        <taxon>Buthida</taxon>
        <taxon>Buthoidea</taxon>
        <taxon>Buthidae</taxon>
        <taxon>Buthus</taxon>
    </lineage>
</organism>
<protein>
    <recommendedName>
        <fullName>Potassium channel toxin alpha-KTx Tx308</fullName>
    </recommendedName>
</protein>
<proteinExistence type="evidence at transcript level"/>
<reference key="1">
    <citation type="submission" date="2008-10" db="EMBL/GenBank/DDBJ databases">
        <title>Buthus occitanus israelis scorpion toxin.</title>
        <authorList>
            <person name="Zilberberg N."/>
            <person name="Kozminsky-Atias A."/>
        </authorList>
    </citation>
    <scope>NUCLEOTIDE SEQUENCE [MRNA]</scope>
</reference>
<reference key="2">
    <citation type="journal article" date="2012" name="Peptides">
        <title>Identification and molecular characterization of three new K(+)-channel specific toxins from the Chinese scorpion Mesobuthus martensii Karsch revealing intronic number polymorphism and alternative splicing in duplicated genes.</title>
        <authorList>
            <person name="Zeng X.C."/>
            <person name="Zhang L."/>
            <person name="Nie Y."/>
            <person name="Luo X."/>
        </authorList>
    </citation>
    <scope>NOMENCLATURE</scope>
</reference>
<comment type="function">
    <text evidence="1">May block potassium channels.</text>
</comment>
<comment type="subcellular location">
    <subcellularLocation>
        <location evidence="1">Secreted</location>
    </subcellularLocation>
</comment>
<comment type="tissue specificity">
    <text>Expressed by the venom gland.</text>
</comment>
<comment type="domain">
    <text evidence="3">Has the structural arrangement of an alpha-helix connected to antiparallel beta-sheets by disulfide bonds (CS-alpha/beta).</text>
</comment>
<comment type="similarity">
    <text evidence="3">Belongs to the short scorpion toxin superfamily. Potassium channel inhibitor family. Alpha-KTx 23 subfamily.</text>
</comment>
<comment type="caution">
    <text evidence="3">Has been classified as a the potassium channel toxin alpha-KTx 22.5 in PubMed:22230549. Since the subfamily 22 has already been attributed, this peptide should be reclassified as alpha-KTx 23.5.</text>
</comment>
<accession>B8XH30</accession>